<dbReference type="EC" id="2.3.1.-" evidence="7"/>
<dbReference type="EMBL" id="BN001304">
    <property type="protein sequence ID" value="CBF79143.1"/>
    <property type="molecule type" value="Genomic_DNA"/>
</dbReference>
<dbReference type="RefSeq" id="XP_664675.1">
    <property type="nucleotide sequence ID" value="XM_659583.1"/>
</dbReference>
<dbReference type="SMR" id="Q5AXA9"/>
<dbReference type="STRING" id="227321.Q5AXA9"/>
<dbReference type="EnsemblFungi" id="CBF79143">
    <property type="protein sequence ID" value="CBF79143"/>
    <property type="gene ID" value="ANIA_07071"/>
</dbReference>
<dbReference type="GeneID" id="2869980"/>
<dbReference type="KEGG" id="ani:ANIA_07071"/>
<dbReference type="eggNOG" id="KOG1202">
    <property type="taxonomic scope" value="Eukaryota"/>
</dbReference>
<dbReference type="HOGENOM" id="CLU_000022_6_1_1"/>
<dbReference type="InParanoid" id="Q5AXA9"/>
<dbReference type="OMA" id="FANVVDY"/>
<dbReference type="OrthoDB" id="329835at2759"/>
<dbReference type="Proteomes" id="UP000000560">
    <property type="component" value="Chromosome IV"/>
</dbReference>
<dbReference type="GO" id="GO:0004315">
    <property type="term" value="F:3-oxoacyl-[acyl-carrier-protein] synthase activity"/>
    <property type="evidence" value="ECO:0007669"/>
    <property type="project" value="InterPro"/>
</dbReference>
<dbReference type="GO" id="GO:0004312">
    <property type="term" value="F:fatty acid synthase activity"/>
    <property type="evidence" value="ECO:0000318"/>
    <property type="project" value="GO_Central"/>
</dbReference>
<dbReference type="GO" id="GO:0031177">
    <property type="term" value="F:phosphopantetheine binding"/>
    <property type="evidence" value="ECO:0007669"/>
    <property type="project" value="InterPro"/>
</dbReference>
<dbReference type="GO" id="GO:0006633">
    <property type="term" value="P:fatty acid biosynthetic process"/>
    <property type="evidence" value="ECO:0000318"/>
    <property type="project" value="GO_Central"/>
</dbReference>
<dbReference type="GO" id="GO:0044550">
    <property type="term" value="P:secondary metabolite biosynthetic process"/>
    <property type="evidence" value="ECO:0000318"/>
    <property type="project" value="GO_Central"/>
</dbReference>
<dbReference type="CDD" id="cd00833">
    <property type="entry name" value="PKS"/>
    <property type="match status" value="1"/>
</dbReference>
<dbReference type="FunFam" id="1.10.1200.10:FF:000011">
    <property type="entry name" value="Sterigmatocystin biosynthesis polyketide synthase"/>
    <property type="match status" value="1"/>
</dbReference>
<dbReference type="Gene3D" id="3.30.70.3290">
    <property type="match status" value="1"/>
</dbReference>
<dbReference type="Gene3D" id="3.40.47.10">
    <property type="match status" value="1"/>
</dbReference>
<dbReference type="Gene3D" id="1.10.1200.10">
    <property type="entry name" value="ACP-like"/>
    <property type="match status" value="1"/>
</dbReference>
<dbReference type="Gene3D" id="3.30.70.250">
    <property type="entry name" value="Malonyl-CoA ACP transacylase, ACP-binding"/>
    <property type="match status" value="1"/>
</dbReference>
<dbReference type="Gene3D" id="3.40.366.10">
    <property type="entry name" value="Malonyl-Coenzyme A Acyl Carrier Protein, domain 2"/>
    <property type="match status" value="2"/>
</dbReference>
<dbReference type="Gene3D" id="3.10.129.110">
    <property type="entry name" value="Polyketide synthase dehydratase"/>
    <property type="match status" value="1"/>
</dbReference>
<dbReference type="InterPro" id="IPR001227">
    <property type="entry name" value="Ac_transferase_dom_sf"/>
</dbReference>
<dbReference type="InterPro" id="IPR036736">
    <property type="entry name" value="ACP-like_sf"/>
</dbReference>
<dbReference type="InterPro" id="IPR014043">
    <property type="entry name" value="Acyl_transferase_dom"/>
</dbReference>
<dbReference type="InterPro" id="IPR016035">
    <property type="entry name" value="Acyl_Trfase/lysoPLipase"/>
</dbReference>
<dbReference type="InterPro" id="IPR018201">
    <property type="entry name" value="Ketoacyl_synth_AS"/>
</dbReference>
<dbReference type="InterPro" id="IPR014031">
    <property type="entry name" value="Ketoacyl_synth_C"/>
</dbReference>
<dbReference type="InterPro" id="IPR014030">
    <property type="entry name" value="Ketoacyl_synth_N"/>
</dbReference>
<dbReference type="InterPro" id="IPR016036">
    <property type="entry name" value="Malonyl_transacylase_ACP-bd"/>
</dbReference>
<dbReference type="InterPro" id="IPR020841">
    <property type="entry name" value="PKS_Beta-ketoAc_synthase_dom"/>
</dbReference>
<dbReference type="InterPro" id="IPR042104">
    <property type="entry name" value="PKS_dehydratase_sf"/>
</dbReference>
<dbReference type="InterPro" id="IPR049900">
    <property type="entry name" value="PKS_mFAS_DH"/>
</dbReference>
<dbReference type="InterPro" id="IPR050091">
    <property type="entry name" value="PKS_NRPS_Biosynth_Enz"/>
</dbReference>
<dbReference type="InterPro" id="IPR020806">
    <property type="entry name" value="PKS_PP-bd"/>
</dbReference>
<dbReference type="InterPro" id="IPR009081">
    <property type="entry name" value="PP-bd_ACP"/>
</dbReference>
<dbReference type="InterPro" id="IPR006162">
    <property type="entry name" value="Ppantetheine_attach_site"/>
</dbReference>
<dbReference type="InterPro" id="IPR030918">
    <property type="entry name" value="PT_fungal_PKS"/>
</dbReference>
<dbReference type="InterPro" id="IPR032088">
    <property type="entry name" value="SAT"/>
</dbReference>
<dbReference type="InterPro" id="IPR016039">
    <property type="entry name" value="Thiolase-like"/>
</dbReference>
<dbReference type="NCBIfam" id="TIGR04532">
    <property type="entry name" value="PT_fungal_PKS"/>
    <property type="match status" value="1"/>
</dbReference>
<dbReference type="PANTHER" id="PTHR43775">
    <property type="entry name" value="FATTY ACID SYNTHASE"/>
    <property type="match status" value="1"/>
</dbReference>
<dbReference type="PANTHER" id="PTHR43775:SF24">
    <property type="entry name" value="NON-REDUCING POLYKETIDE SYNTHASE APTA-RELATED"/>
    <property type="match status" value="1"/>
</dbReference>
<dbReference type="Pfam" id="PF00698">
    <property type="entry name" value="Acyl_transf_1"/>
    <property type="match status" value="1"/>
</dbReference>
<dbReference type="Pfam" id="PF22621">
    <property type="entry name" value="CurL-like_PKS_C"/>
    <property type="match status" value="1"/>
</dbReference>
<dbReference type="Pfam" id="PF00109">
    <property type="entry name" value="ketoacyl-synt"/>
    <property type="match status" value="1"/>
</dbReference>
<dbReference type="Pfam" id="PF02801">
    <property type="entry name" value="Ketoacyl-synt_C"/>
    <property type="match status" value="1"/>
</dbReference>
<dbReference type="Pfam" id="PF00550">
    <property type="entry name" value="PP-binding"/>
    <property type="match status" value="1"/>
</dbReference>
<dbReference type="Pfam" id="PF16073">
    <property type="entry name" value="SAT"/>
    <property type="match status" value="1"/>
</dbReference>
<dbReference type="SMART" id="SM00827">
    <property type="entry name" value="PKS_AT"/>
    <property type="match status" value="1"/>
</dbReference>
<dbReference type="SMART" id="SM00825">
    <property type="entry name" value="PKS_KS"/>
    <property type="match status" value="1"/>
</dbReference>
<dbReference type="SMART" id="SM00823">
    <property type="entry name" value="PKS_PP"/>
    <property type="match status" value="1"/>
</dbReference>
<dbReference type="SUPFAM" id="SSF47336">
    <property type="entry name" value="ACP-like"/>
    <property type="match status" value="1"/>
</dbReference>
<dbReference type="SUPFAM" id="SSF52151">
    <property type="entry name" value="FabD/lysophospholipase-like"/>
    <property type="match status" value="1"/>
</dbReference>
<dbReference type="SUPFAM" id="SSF55048">
    <property type="entry name" value="Probable ACP-binding domain of malonyl-CoA ACP transacylase"/>
    <property type="match status" value="1"/>
</dbReference>
<dbReference type="SUPFAM" id="SSF53901">
    <property type="entry name" value="Thiolase-like"/>
    <property type="match status" value="1"/>
</dbReference>
<dbReference type="PROSITE" id="PS50075">
    <property type="entry name" value="CARRIER"/>
    <property type="match status" value="1"/>
</dbReference>
<dbReference type="PROSITE" id="PS00606">
    <property type="entry name" value="KS3_1"/>
    <property type="match status" value="1"/>
</dbReference>
<dbReference type="PROSITE" id="PS52004">
    <property type="entry name" value="KS3_2"/>
    <property type="match status" value="1"/>
</dbReference>
<dbReference type="PROSITE" id="PS00012">
    <property type="entry name" value="PHOSPHOPANTETHEINE"/>
    <property type="match status" value="1"/>
</dbReference>
<dbReference type="PROSITE" id="PS52019">
    <property type="entry name" value="PKS_MFAS_DH"/>
    <property type="match status" value="1"/>
</dbReference>
<accession>Q5AXA9</accession>
<accession>C8VB30</accession>
<comment type="function">
    <text evidence="7">Non-reducing polyketide synthase; part of the pkg gene cluster that mediates the biosynthesis of dihydrocitreoisocoumarin and 6,8-dihydroxy-3-(2-oxopropyl)-isocoumarin (PubMed:22510154). The non-reducing polyketide synthase pkgA performs the condensation of one acetyl-CoA starter unit with 6 and 5 malonyl-CoA units, respectively (PubMed:22510154). As pkgA lacks a releasing domain, the thioesterase pkgB is necessary to break the thioester bond and release dihydrocitreoisocoumarin and 6,8-dihydroxy-3-(2-oxopropyl)-isocoumarin from pkgA (PubMed:22510154).</text>
</comment>
<comment type="catalytic activity">
    <reaction evidence="7">
        <text>holo-[ACP] + 6 malonyl-CoA + acetyl-CoA + 6 H(+) = 3,5,7,9,11,13-hexaoxotetradecanoyl-[ACP] + 6 CO2 + 7 CoA</text>
        <dbReference type="Rhea" id="RHEA:64484"/>
        <dbReference type="Rhea" id="RHEA-COMP:9685"/>
        <dbReference type="Rhea" id="RHEA-COMP:15846"/>
        <dbReference type="ChEBI" id="CHEBI:15378"/>
        <dbReference type="ChEBI" id="CHEBI:16526"/>
        <dbReference type="ChEBI" id="CHEBI:57287"/>
        <dbReference type="ChEBI" id="CHEBI:57288"/>
        <dbReference type="ChEBI" id="CHEBI:57384"/>
        <dbReference type="ChEBI" id="CHEBI:64479"/>
        <dbReference type="ChEBI" id="CHEBI:142800"/>
    </reaction>
    <physiologicalReaction direction="left-to-right" evidence="7">
        <dbReference type="Rhea" id="RHEA:64485"/>
    </physiologicalReaction>
</comment>
<comment type="catalytic activity">
    <reaction evidence="7">
        <text>holo-[ACP] + 5 malonyl-CoA + acetyl-CoA + 5 H(+) = 3,5,7,9,11-pentaoxododecanoyl-[ACP] + 5 CO2 + 6 CoA</text>
        <dbReference type="Rhea" id="RHEA:64488"/>
        <dbReference type="Rhea" id="RHEA-COMP:9685"/>
        <dbReference type="Rhea" id="RHEA-COMP:16607"/>
        <dbReference type="ChEBI" id="CHEBI:15378"/>
        <dbReference type="ChEBI" id="CHEBI:16526"/>
        <dbReference type="ChEBI" id="CHEBI:57287"/>
        <dbReference type="ChEBI" id="CHEBI:57288"/>
        <dbReference type="ChEBI" id="CHEBI:57384"/>
        <dbReference type="ChEBI" id="CHEBI:64479"/>
        <dbReference type="ChEBI" id="CHEBI:155859"/>
    </reaction>
    <physiologicalReaction direction="left-to-right" evidence="7">
        <dbReference type="Rhea" id="RHEA:64489"/>
    </physiologicalReaction>
</comment>
<comment type="cofactor">
    <cofactor evidence="1">
        <name>pantetheine 4'-phosphate</name>
        <dbReference type="ChEBI" id="CHEBI:47942"/>
    </cofactor>
    <text evidence="2">Binds 1 phosphopantetheine covalently.</text>
</comment>
<comment type="pathway">
    <text evidence="7">Secondary metabolite biosynthesis.</text>
</comment>
<comment type="domain">
    <text evidence="9">Multidomain protein; including a starter unit:ACP transacylase (SAT) that selects the starter unit; a ketosynthase (KS) that catalyzes repeated decarboxylative condensation to elongate the polyketide backbone; a malonyl-CoA:ACP transacylase (MAT) that selects and transfers the extender unit malonyl-CoA; a product template (PT) domain that controls the immediate cyclization regioselectivity of the reactive polyketide backbone; and an acyl-carrier protein (ACP) that serves as the tether of the growing and completed polyketide via its phosphopantetheinyl arm.</text>
</comment>
<reference key="1">
    <citation type="journal article" date="2005" name="Nature">
        <title>Sequencing of Aspergillus nidulans and comparative analysis with A. fumigatus and A. oryzae.</title>
        <authorList>
            <person name="Galagan J.E."/>
            <person name="Calvo S.E."/>
            <person name="Cuomo C."/>
            <person name="Ma L.-J."/>
            <person name="Wortman J.R."/>
            <person name="Batzoglou S."/>
            <person name="Lee S.-I."/>
            <person name="Bastuerkmen M."/>
            <person name="Spevak C.C."/>
            <person name="Clutterbuck J."/>
            <person name="Kapitonov V."/>
            <person name="Jurka J."/>
            <person name="Scazzocchio C."/>
            <person name="Farman M.L."/>
            <person name="Butler J."/>
            <person name="Purcell S."/>
            <person name="Harris S."/>
            <person name="Braus G.H."/>
            <person name="Draht O."/>
            <person name="Busch S."/>
            <person name="D'Enfert C."/>
            <person name="Bouchier C."/>
            <person name="Goldman G.H."/>
            <person name="Bell-Pedersen D."/>
            <person name="Griffiths-Jones S."/>
            <person name="Doonan J.H."/>
            <person name="Yu J."/>
            <person name="Vienken K."/>
            <person name="Pain A."/>
            <person name="Freitag M."/>
            <person name="Selker E.U."/>
            <person name="Archer D.B."/>
            <person name="Penalva M.A."/>
            <person name="Oakley B.R."/>
            <person name="Momany M."/>
            <person name="Tanaka T."/>
            <person name="Kumagai T."/>
            <person name="Asai K."/>
            <person name="Machida M."/>
            <person name="Nierman W.C."/>
            <person name="Denning D.W."/>
            <person name="Caddick M.X."/>
            <person name="Hynes M."/>
            <person name="Paoletti M."/>
            <person name="Fischer R."/>
            <person name="Miller B.L."/>
            <person name="Dyer P.S."/>
            <person name="Sachs M.S."/>
            <person name="Osmani S.A."/>
            <person name="Birren B.W."/>
        </authorList>
    </citation>
    <scope>NUCLEOTIDE SEQUENCE [LARGE SCALE GENOMIC DNA]</scope>
    <source>
        <strain>FGSC A4 / ATCC 38163 / CBS 112.46 / NRRL 194 / M139</strain>
    </source>
</reference>
<reference key="2">
    <citation type="journal article" date="2009" name="Fungal Genet. Biol.">
        <title>The 2008 update of the Aspergillus nidulans genome annotation: a community effort.</title>
        <authorList>
            <person name="Wortman J.R."/>
            <person name="Gilsenan J.M."/>
            <person name="Joardar V."/>
            <person name="Deegan J."/>
            <person name="Clutterbuck J."/>
            <person name="Andersen M.R."/>
            <person name="Archer D."/>
            <person name="Bencina M."/>
            <person name="Braus G."/>
            <person name="Coutinho P."/>
            <person name="von Dohren H."/>
            <person name="Doonan J."/>
            <person name="Driessen A.J."/>
            <person name="Durek P."/>
            <person name="Espeso E."/>
            <person name="Fekete E."/>
            <person name="Flipphi M."/>
            <person name="Estrada C.G."/>
            <person name="Geysens S."/>
            <person name="Goldman G."/>
            <person name="de Groot P.W."/>
            <person name="Hansen K."/>
            <person name="Harris S.D."/>
            <person name="Heinekamp T."/>
            <person name="Helmstaedt K."/>
            <person name="Henrissat B."/>
            <person name="Hofmann G."/>
            <person name="Homan T."/>
            <person name="Horio T."/>
            <person name="Horiuchi H."/>
            <person name="James S."/>
            <person name="Jones M."/>
            <person name="Karaffa L."/>
            <person name="Karanyi Z."/>
            <person name="Kato M."/>
            <person name="Keller N."/>
            <person name="Kelly D.E."/>
            <person name="Kiel J.A."/>
            <person name="Kim J.M."/>
            <person name="van der Klei I.J."/>
            <person name="Klis F.M."/>
            <person name="Kovalchuk A."/>
            <person name="Krasevec N."/>
            <person name="Kubicek C.P."/>
            <person name="Liu B."/>
            <person name="Maccabe A."/>
            <person name="Meyer V."/>
            <person name="Mirabito P."/>
            <person name="Miskei M."/>
            <person name="Mos M."/>
            <person name="Mullins J."/>
            <person name="Nelson D.R."/>
            <person name="Nielsen J."/>
            <person name="Oakley B.R."/>
            <person name="Osmani S.A."/>
            <person name="Pakula T."/>
            <person name="Paszewski A."/>
            <person name="Paulsen I."/>
            <person name="Pilsyk S."/>
            <person name="Pocsi I."/>
            <person name="Punt P.J."/>
            <person name="Ram A.F."/>
            <person name="Ren Q."/>
            <person name="Robellet X."/>
            <person name="Robson G."/>
            <person name="Seiboth B."/>
            <person name="van Solingen P."/>
            <person name="Specht T."/>
            <person name="Sun J."/>
            <person name="Taheri-Talesh N."/>
            <person name="Takeshita N."/>
            <person name="Ussery D."/>
            <person name="vanKuyk P.A."/>
            <person name="Visser H."/>
            <person name="van de Vondervoort P.J."/>
            <person name="de Vries R.P."/>
            <person name="Walton J."/>
            <person name="Xiang X."/>
            <person name="Xiong Y."/>
            <person name="Zeng A.P."/>
            <person name="Brandt B.W."/>
            <person name="Cornell M.J."/>
            <person name="van den Hondel C.A."/>
            <person name="Visser J."/>
            <person name="Oliver S.G."/>
            <person name="Turner G."/>
        </authorList>
    </citation>
    <scope>GENOME REANNOTATION</scope>
    <source>
        <strain>FGSC A4 / ATCC 38163 / CBS 112.46 / NRRL 194 / M139</strain>
    </source>
</reference>
<reference key="3">
    <citation type="journal article" date="2012" name="J. Am. Chem. Soc.">
        <title>Illuminating the diversity of aromatic polyketide synthases in Aspergillus nidulans.</title>
        <authorList>
            <person name="Ahuja M."/>
            <person name="Chiang Y.M."/>
            <person name="Chang S.L."/>
            <person name="Praseuth M.B."/>
            <person name="Entwistle R."/>
            <person name="Sanchez J.F."/>
            <person name="Lo H.C."/>
            <person name="Yeh H.H."/>
            <person name="Oakley B.R."/>
            <person name="Wang C.C."/>
        </authorList>
    </citation>
    <scope>DOMAIN</scope>
    <scope>FUNCTION</scope>
    <scope>CATALYTIC ACTIVITY</scope>
    <scope>PATHWAY</scope>
</reference>
<sequence>MTPSASPSPSPNPGDANVKVDADSPNDFILFSHELPSGDIQDLIRRLHRYGTLPGYPHLARFLQECALLLRTEIQKLPRALRDSVPPFHDVVTLASHWDRLKSGPLSGAWDGPFLCLYEIAMLIGHHETHQLSYRRPACLVGISVGLFSAAAVAVSKSISDLVSYGAESVRTAFAFCVHVQRVSQELEPTMTEQAASVSWATVVIGVPADTIQVELDRFNHLKESESPGANARPLTGVSISHVDQTSVGVTGPPSRLKQLFRQSELLRSSRHSALPISGGLCHVPNVYDDEDVRAILEMAEVWEKWGTRALQVPLISPFTGSPFLCPDAYHLIEAICTEALTKQLYFDKLAGGVVTQLNGLSCQVLHYGASLMSDTIIDDVTSQLSPCDTARQCLVDWALRDAFDQLPGGPTPPRDAKLAVVGMACRMPGGADTPDHFWELLMNGVDTHTTVPPDRFDLDAHFDPSGEKENTTTKGSQSNRPLSRQAEQTDPMQRLALVTAYEALEMAGFVPNRTPSSHLSRVGTYYGQASDDYREVNAGQKIGTYGIPGTERGFGNGRINYFFNFQGPSFNIDTACSSGLAAVQAACSALWAGEADTVVAGGLNVITSPDIYCMLSKGHFLSKTGQCKVWDIGADGYCRADGIGSVVIKRLDDALADNDVILACISAGATNHSAESISITQPHAAAQRENYRQVMDRAGVSPLDVSFVELHGTGTQVGDAVESESVLSFFAPLGRRSHPDKRLHLGAVKSNIGHGEAAAGIASLIKVLLMYRNNTIPRHIGIRTAMNPVVAQHLANRNAGILSENHPWLAATASKKRYAIVNSFGAHGGNTTLLLEDAPSQHSQRYKNHSRRVVASSEVVCTSAKSKASLRANIRALLAYLDTHQETDLRDLAYTTSARRMHHHIRIASSVTSTAQLRSFLQAAADDVDAYAKHIATATKRTAVFAFSGQGCLYHGAAAHLFEQAPLFRNQVLQLDRIVRRLGFPSILVTVAGDAASVYDSARCPHRESTPSSDASHDSNTNRTSTAPAVDSPLIAQLALVVIQIALVQYWGLLGIKPSVVIGHSLGEYAALVAASVLSVADALFLVGKRAELMLAVCEPGSHAMLSVRGASVDRIEELCRESEKRYPFEVSCVNGLTDLVVTGLRGDMASLRDLLQGSGLKCVLLDIPFAFHSKQMSPILEDFENAAQQITFQEPAVPVISPLLGKCISEANVINGKYLARATREPVDFVAALDSAWADGTVNDKSIWIDIGPHPVCTSFASNHYGKAATQSFASLRRGDETLSTLTATLAALHCLGLPVDWNEYYDLRENPARLLHLDSYQWNYKNYWIPYEGSWTLDKAHAGQNNKTKDDNSAVTPAFFTSSVQQIIFEEYDESMGRMEALSDLHHPDLQGAADGHKIHGRSVVTGSIWADITLTVGEYLYKQMVPGGKMPHMNVKGMEVLEAQVLHPDMSQFIQIEGVLDLPRQQTAVRLYAASANGTRNTDKPFASATVCYEEAQDWQDQWQMTSHLVAARANSFWEMAAGGSDDNARPAGKGGPRVNNFFRSIAYQLFANVVDYGARYRGMQRVALSEDTLEATADIVLDKDRHGTWHTPPHWIDSAFQLAGFVMNSFGVQGDGKISGSSRDFFYITPGWRHFRLLERLEPGPEATYRSFVRMFPVGSEPGAYSGDIYLHRGKRLVGVCAGIKFKAVPRALMPVLFPRIEPQAGKRRNQAQTAENRLVKGKGNCEYTHTVFQEPKSRTPAYDVTKSQPHAEHCDISISQKTQPVAAVPVTQPALPAKERGEQNQGQSQSQNAQATACLSLISDETGLDLDDLTGEAAFADLGVDSLMSLALSAKIRAELGIDVQSSIFLECPTVQDLVTWLSK</sequence>
<proteinExistence type="evidence at protein level"/>
<evidence type="ECO:0000250" key="1">
    <source>
        <dbReference type="UniProtKB" id="A0A0K0MCJ4"/>
    </source>
</evidence>
<evidence type="ECO:0000255" key="2"/>
<evidence type="ECO:0000255" key="3">
    <source>
        <dbReference type="PROSITE-ProRule" id="PRU00258"/>
    </source>
</evidence>
<evidence type="ECO:0000255" key="4">
    <source>
        <dbReference type="PROSITE-ProRule" id="PRU01348"/>
    </source>
</evidence>
<evidence type="ECO:0000255" key="5">
    <source>
        <dbReference type="PROSITE-ProRule" id="PRU01363"/>
    </source>
</evidence>
<evidence type="ECO:0000256" key="6">
    <source>
        <dbReference type="SAM" id="MobiDB-lite"/>
    </source>
</evidence>
<evidence type="ECO:0000269" key="7">
    <source>
    </source>
</evidence>
<evidence type="ECO:0000303" key="8">
    <source>
    </source>
</evidence>
<evidence type="ECO:0000305" key="9">
    <source>
    </source>
</evidence>
<protein>
    <recommendedName>
        <fullName evidence="8">Non-reducing polyketide synthase pkgA</fullName>
        <shortName evidence="8">NR-PKS pkgA</shortName>
        <ecNumber evidence="7">2.3.1.-</ecNumber>
    </recommendedName>
    <alternativeName>
        <fullName evidence="8">Pkg biosynthesis cluster protein A</fullName>
    </alternativeName>
</protein>
<feature type="chain" id="PRO_0000450874" description="Non-reducing polyketide synthase pkgA">
    <location>
        <begin position="1"/>
        <end position="1870"/>
    </location>
</feature>
<feature type="domain" description="Ketosynthase family 3 (KS3)" evidence="4 9">
    <location>
        <begin position="416"/>
        <end position="838"/>
    </location>
</feature>
<feature type="domain" description="PKS/mFAS DH" evidence="5">
    <location>
        <begin position="1368"/>
        <end position="1700"/>
    </location>
</feature>
<feature type="domain" description="Carrier" evidence="3 9">
    <location>
        <begin position="1795"/>
        <end position="1870"/>
    </location>
</feature>
<feature type="region of interest" description="N-terminal acylcarrier protein transacylase domain (SAT)" evidence="2 9">
    <location>
        <begin position="40"/>
        <end position="279"/>
    </location>
</feature>
<feature type="region of interest" description="Disordered" evidence="6">
    <location>
        <begin position="453"/>
        <end position="492"/>
    </location>
</feature>
<feature type="region of interest" description="Malonyl-CoA:ACP transacylase (MAT) domain" evidence="2 9">
    <location>
        <begin position="947"/>
        <end position="1282"/>
    </location>
</feature>
<feature type="region of interest" description="Disordered" evidence="6">
    <location>
        <begin position="1004"/>
        <end position="1027"/>
    </location>
</feature>
<feature type="region of interest" description="Product template (PT) domain" evidence="2 9">
    <location>
        <begin position="1364"/>
        <end position="1704"/>
    </location>
</feature>
<feature type="region of interest" description="N-terminal hotdog fold" evidence="5">
    <location>
        <begin position="1368"/>
        <end position="1502"/>
    </location>
</feature>
<feature type="region of interest" description="C-terminal hotdog fold" evidence="5">
    <location>
        <begin position="1538"/>
        <end position="1700"/>
    </location>
</feature>
<feature type="compositionally biased region" description="Basic and acidic residues" evidence="6">
    <location>
        <begin position="455"/>
        <end position="472"/>
    </location>
</feature>
<feature type="compositionally biased region" description="Polar residues" evidence="6">
    <location>
        <begin position="473"/>
        <end position="492"/>
    </location>
</feature>
<feature type="compositionally biased region" description="Polar residues" evidence="6">
    <location>
        <begin position="1011"/>
        <end position="1027"/>
    </location>
</feature>
<feature type="active site" description="For beta-ketoacyl synthase activity" evidence="4">
    <location>
        <position position="577"/>
    </location>
</feature>
<feature type="active site" description="For beta-ketoacyl synthase activity" evidence="4">
    <location>
        <position position="712"/>
    </location>
</feature>
<feature type="active site" description="For beta-ketoacyl synthase activity" evidence="4">
    <location>
        <position position="755"/>
    </location>
</feature>
<feature type="active site" description="Proton acceptor; for dehydratase activity" evidence="5">
    <location>
        <position position="1400"/>
    </location>
</feature>
<feature type="active site" description="Proton donor; for dehydratase activity" evidence="5">
    <location>
        <position position="1602"/>
    </location>
</feature>
<feature type="modified residue" description="O-(pantetheine 4'-phosphoryl)serine" evidence="3">
    <location>
        <position position="1832"/>
    </location>
</feature>
<keyword id="KW-0012">Acyltransferase</keyword>
<keyword id="KW-0511">Multifunctional enzyme</keyword>
<keyword id="KW-0596">Phosphopantetheine</keyword>
<keyword id="KW-0597">Phosphoprotein</keyword>
<keyword id="KW-1185">Reference proteome</keyword>
<keyword id="KW-0808">Transferase</keyword>
<gene>
    <name evidence="8" type="primary">pkgA</name>
    <name type="ORF">ANIA_07071</name>
</gene>
<organism>
    <name type="scientific">Emericella nidulans (strain FGSC A4 / ATCC 38163 / CBS 112.46 / NRRL 194 / M139)</name>
    <name type="common">Aspergillus nidulans</name>
    <dbReference type="NCBI Taxonomy" id="227321"/>
    <lineage>
        <taxon>Eukaryota</taxon>
        <taxon>Fungi</taxon>
        <taxon>Dikarya</taxon>
        <taxon>Ascomycota</taxon>
        <taxon>Pezizomycotina</taxon>
        <taxon>Eurotiomycetes</taxon>
        <taxon>Eurotiomycetidae</taxon>
        <taxon>Eurotiales</taxon>
        <taxon>Aspergillaceae</taxon>
        <taxon>Aspergillus</taxon>
        <taxon>Aspergillus subgen. Nidulantes</taxon>
    </lineage>
</organism>
<name>PKGA_EMENI</name>